<name>HTPX_MYCTU</name>
<proteinExistence type="evidence at protein level"/>
<evidence type="ECO:0000250" key="1"/>
<evidence type="ECO:0000255" key="2"/>
<evidence type="ECO:0000269" key="3">
    <source>
    </source>
</evidence>
<evidence type="ECO:0000305" key="4"/>
<reference key="1">
    <citation type="journal article" date="1998" name="Nature">
        <title>Deciphering the biology of Mycobacterium tuberculosis from the complete genome sequence.</title>
        <authorList>
            <person name="Cole S.T."/>
            <person name="Brosch R."/>
            <person name="Parkhill J."/>
            <person name="Garnier T."/>
            <person name="Churcher C.M."/>
            <person name="Harris D.E."/>
            <person name="Gordon S.V."/>
            <person name="Eiglmeier K."/>
            <person name="Gas S."/>
            <person name="Barry C.E. III"/>
            <person name="Tekaia F."/>
            <person name="Badcock K."/>
            <person name="Basham D."/>
            <person name="Brown D."/>
            <person name="Chillingworth T."/>
            <person name="Connor R."/>
            <person name="Davies R.M."/>
            <person name="Devlin K."/>
            <person name="Feltwell T."/>
            <person name="Gentles S."/>
            <person name="Hamlin N."/>
            <person name="Holroyd S."/>
            <person name="Hornsby T."/>
            <person name="Jagels K."/>
            <person name="Krogh A."/>
            <person name="McLean J."/>
            <person name="Moule S."/>
            <person name="Murphy L.D."/>
            <person name="Oliver S."/>
            <person name="Osborne J."/>
            <person name="Quail M.A."/>
            <person name="Rajandream M.A."/>
            <person name="Rogers J."/>
            <person name="Rutter S."/>
            <person name="Seeger K."/>
            <person name="Skelton S."/>
            <person name="Squares S."/>
            <person name="Squares R."/>
            <person name="Sulston J.E."/>
            <person name="Taylor K."/>
            <person name="Whitehead S."/>
            <person name="Barrell B.G."/>
        </authorList>
    </citation>
    <scope>NUCLEOTIDE SEQUENCE [LARGE SCALE GENOMIC DNA]</scope>
    <source>
        <strain>ATCC 25618 / H37Rv</strain>
    </source>
</reference>
<reference key="2">
    <citation type="journal article" date="2008" name="Vaccine">
        <title>Intranasal delivery of DNA encoding antigens of Mycobacterium tuberculosis by non-pathogenic invasive Escherichia coli.</title>
        <authorList>
            <person name="Brun P."/>
            <person name="Zumbo A."/>
            <person name="Castagliuolo I."/>
            <person name="Delogu G."/>
            <person name="Manfrin F."/>
            <person name="Sali M."/>
            <person name="Fadda G."/>
            <person name="Grillot-Courvalin C."/>
            <person name="Palu G."/>
            <person name="Manganelli R."/>
        </authorList>
    </citation>
    <scope>BIOTECHNOLOGY</scope>
    <source>
        <strain>ATCC 25618 / H37Rv</strain>
    </source>
</reference>
<reference key="3">
    <citation type="journal article" date="2011" name="Mol. Cell. Proteomics">
        <title>Proteogenomic analysis of Mycobacterium tuberculosis by high resolution mass spectrometry.</title>
        <authorList>
            <person name="Kelkar D.S."/>
            <person name="Kumar D."/>
            <person name="Kumar P."/>
            <person name="Balakrishnan L."/>
            <person name="Muthusamy B."/>
            <person name="Yadav A.K."/>
            <person name="Shrivastava P."/>
            <person name="Marimuthu A."/>
            <person name="Anand S."/>
            <person name="Sundaram H."/>
            <person name="Kingsbury R."/>
            <person name="Harsha H.C."/>
            <person name="Nair B."/>
            <person name="Prasad T.S."/>
            <person name="Chauhan D.S."/>
            <person name="Katoch K."/>
            <person name="Katoch V.M."/>
            <person name="Kumar P."/>
            <person name="Chaerkady R."/>
            <person name="Ramachandran S."/>
            <person name="Dash D."/>
            <person name="Pandey A."/>
        </authorList>
    </citation>
    <scope>IDENTIFICATION BY MASS SPECTROMETRY [LARGE SCALE ANALYSIS]</scope>
    <source>
        <strain>ATCC 25618 / H37Rv</strain>
    </source>
</reference>
<feature type="chain" id="PRO_0000138875" description="Protease HtpX homolog">
    <location>
        <begin position="1"/>
        <end position="286"/>
    </location>
</feature>
<feature type="transmembrane region" description="Helical" evidence="2">
    <location>
        <begin position="10"/>
        <end position="30"/>
    </location>
</feature>
<feature type="transmembrane region" description="Helical" evidence="2">
    <location>
        <begin position="33"/>
        <end position="53"/>
    </location>
</feature>
<feature type="transmembrane region" description="Helical" evidence="2">
    <location>
        <begin position="145"/>
        <end position="165"/>
    </location>
</feature>
<feature type="transmembrane region" description="Helical" evidence="2">
    <location>
        <begin position="181"/>
        <end position="201"/>
    </location>
</feature>
<feature type="active site" evidence="1">
    <location>
        <position position="136"/>
    </location>
</feature>
<feature type="binding site" evidence="1">
    <location>
        <position position="135"/>
    </location>
    <ligand>
        <name>Zn(2+)</name>
        <dbReference type="ChEBI" id="CHEBI:29105"/>
        <note>catalytic</note>
    </ligand>
</feature>
<feature type="binding site" evidence="1">
    <location>
        <position position="139"/>
    </location>
    <ligand>
        <name>Zn(2+)</name>
        <dbReference type="ChEBI" id="CHEBI:29105"/>
        <note>catalytic</note>
    </ligand>
</feature>
<feature type="binding site" evidence="1">
    <location>
        <position position="206"/>
    </location>
    <ligand>
        <name>Zn(2+)</name>
        <dbReference type="ChEBI" id="CHEBI:29105"/>
        <note>catalytic</note>
    </ligand>
</feature>
<accession>P9WHS5</accession>
<accession>L0T459</accession>
<accession>O06429</accession>
<accession>P65815</accession>
<organism>
    <name type="scientific">Mycobacterium tuberculosis (strain ATCC 25618 / H37Rv)</name>
    <dbReference type="NCBI Taxonomy" id="83332"/>
    <lineage>
        <taxon>Bacteria</taxon>
        <taxon>Bacillati</taxon>
        <taxon>Actinomycetota</taxon>
        <taxon>Actinomycetes</taxon>
        <taxon>Mycobacteriales</taxon>
        <taxon>Mycobacteriaceae</taxon>
        <taxon>Mycobacterium</taxon>
        <taxon>Mycobacterium tuberculosis complex</taxon>
    </lineage>
</organism>
<gene>
    <name type="primary">htpX</name>
    <name type="ordered locus">Rv0563</name>
    <name type="ORF">MTCY25D10.42</name>
    <name type="ORF">MTV039.01</name>
</gene>
<keyword id="KW-1003">Cell membrane</keyword>
<keyword id="KW-0378">Hydrolase</keyword>
<keyword id="KW-0472">Membrane</keyword>
<keyword id="KW-0479">Metal-binding</keyword>
<keyword id="KW-0482">Metalloprotease</keyword>
<keyword id="KW-0645">Protease</keyword>
<keyword id="KW-1185">Reference proteome</keyword>
<keyword id="KW-0812">Transmembrane</keyword>
<keyword id="KW-1133">Transmembrane helix</keyword>
<keyword id="KW-0862">Zinc</keyword>
<dbReference type="EC" id="3.4.24.-"/>
<dbReference type="EMBL" id="AL123456">
    <property type="protein sequence ID" value="CCP43301.1"/>
    <property type="molecule type" value="Genomic_DNA"/>
</dbReference>
<dbReference type="PIR" id="F70549">
    <property type="entry name" value="F70549"/>
</dbReference>
<dbReference type="RefSeq" id="NP_215077.1">
    <property type="nucleotide sequence ID" value="NC_000962.3"/>
</dbReference>
<dbReference type="RefSeq" id="WP_003402959.1">
    <property type="nucleotide sequence ID" value="NZ_NVQJ01000036.1"/>
</dbReference>
<dbReference type="FunCoup" id="P9WHS5">
    <property type="interactions" value="23"/>
</dbReference>
<dbReference type="STRING" id="83332.Rv0563"/>
<dbReference type="PaxDb" id="83332-Rv0563"/>
<dbReference type="DNASU" id="887649"/>
<dbReference type="GeneID" id="887649"/>
<dbReference type="KEGG" id="mtu:Rv0563"/>
<dbReference type="KEGG" id="mtv:RVBD_0563"/>
<dbReference type="TubercuList" id="Rv0563"/>
<dbReference type="eggNOG" id="COG0501">
    <property type="taxonomic scope" value="Bacteria"/>
</dbReference>
<dbReference type="InParanoid" id="P9WHS5"/>
<dbReference type="OrthoDB" id="15218at2"/>
<dbReference type="PhylomeDB" id="P9WHS5"/>
<dbReference type="Proteomes" id="UP000001584">
    <property type="component" value="Chromosome"/>
</dbReference>
<dbReference type="GO" id="GO:0005576">
    <property type="term" value="C:extracellular region"/>
    <property type="evidence" value="ECO:0007005"/>
    <property type="project" value="MTBBASE"/>
</dbReference>
<dbReference type="GO" id="GO:0005886">
    <property type="term" value="C:plasma membrane"/>
    <property type="evidence" value="ECO:0007005"/>
    <property type="project" value="MTBBASE"/>
</dbReference>
<dbReference type="GO" id="GO:0004222">
    <property type="term" value="F:metalloendopeptidase activity"/>
    <property type="evidence" value="ECO:0007669"/>
    <property type="project" value="UniProtKB-UniRule"/>
</dbReference>
<dbReference type="GO" id="GO:0008270">
    <property type="term" value="F:zinc ion binding"/>
    <property type="evidence" value="ECO:0007669"/>
    <property type="project" value="UniProtKB-UniRule"/>
</dbReference>
<dbReference type="GO" id="GO:0006508">
    <property type="term" value="P:proteolysis"/>
    <property type="evidence" value="ECO:0007669"/>
    <property type="project" value="UniProtKB-KW"/>
</dbReference>
<dbReference type="CDD" id="cd07336">
    <property type="entry name" value="M48B_HtpX_like"/>
    <property type="match status" value="1"/>
</dbReference>
<dbReference type="FunFam" id="3.30.2010.10:FF:000008">
    <property type="entry name" value="Protease HtpX homolog"/>
    <property type="match status" value="1"/>
</dbReference>
<dbReference type="Gene3D" id="3.30.2010.10">
    <property type="entry name" value="Metalloproteases ('zincins'), catalytic domain"/>
    <property type="match status" value="1"/>
</dbReference>
<dbReference type="HAMAP" id="MF_00188">
    <property type="entry name" value="Pept_M48_protease_HtpX"/>
    <property type="match status" value="1"/>
</dbReference>
<dbReference type="InterPro" id="IPR050083">
    <property type="entry name" value="HtpX_protease"/>
</dbReference>
<dbReference type="InterPro" id="IPR022919">
    <property type="entry name" value="Pept_M48_protease_HtpX"/>
</dbReference>
<dbReference type="InterPro" id="IPR001915">
    <property type="entry name" value="Peptidase_M48"/>
</dbReference>
<dbReference type="NCBIfam" id="NF002839">
    <property type="entry name" value="PRK03072.1"/>
    <property type="match status" value="1"/>
</dbReference>
<dbReference type="PANTHER" id="PTHR43221">
    <property type="entry name" value="PROTEASE HTPX"/>
    <property type="match status" value="1"/>
</dbReference>
<dbReference type="PANTHER" id="PTHR43221:SF1">
    <property type="entry name" value="PROTEASE HTPX"/>
    <property type="match status" value="1"/>
</dbReference>
<dbReference type="Pfam" id="PF01435">
    <property type="entry name" value="Peptidase_M48"/>
    <property type="match status" value="1"/>
</dbReference>
<dbReference type="PROSITE" id="PS00142">
    <property type="entry name" value="ZINC_PROTEASE"/>
    <property type="match status" value="1"/>
</dbReference>
<sequence length="286" mass="30682">MTWHPHANRLKTFLLLVGMSALIVAVGALFGRTALMLAALFAVGMNVYVYFNSDKLALRAMHAQPVSELQAPAMYRIVRELATSAHQPMPRLYISDTAAPNAFATGRNPRNAAVCCTTGILRILNERELRAVLGHELSHVYNRDILISCVAGALAAVITALANMAMWAGMFGGNRDNANPFALLLVALLGPIAATVIRMAVSRSREYQADESGAVLTGDPLALASALRKISGGVQAAPLPPEPQLASQAHLMIANPFRAGERIGSLFSTHPPIEDRIRRLEAMARG</sequence>
<protein>
    <recommendedName>
        <fullName>Protease HtpX homolog</fullName>
        <ecNumber>3.4.24.-</ecNumber>
    </recommendedName>
</protein>
<comment type="cofactor">
    <cofactor evidence="1">
        <name>Zn(2+)</name>
        <dbReference type="ChEBI" id="CHEBI:29105"/>
    </cofactor>
    <text evidence="1">Binds 1 zinc ion per subunit.</text>
</comment>
<comment type="subcellular location">
    <subcellularLocation>
        <location evidence="1">Cell membrane</location>
        <topology evidence="1">Multi-pass membrane protein</topology>
    </subcellularLocation>
</comment>
<comment type="biotechnology">
    <text evidence="3">Mice immunized with recombinant bacteria carrying a DNA vaccine encoding HtpX were significantly protected from challenge with M.tuberculosis, indicating this might be a good vaccine candidate.</text>
</comment>
<comment type="similarity">
    <text evidence="4">Belongs to the peptidase M48B family.</text>
</comment>